<name>MT25B_BOVIN</name>
<keyword id="KW-0175">Coiled coil</keyword>
<keyword id="KW-0472">Membrane</keyword>
<keyword id="KW-1185">Reference proteome</keyword>
<keyword id="KW-0812">Transmembrane</keyword>
<keyword id="KW-1133">Transmembrane helix</keyword>
<gene>
    <name evidence="1" type="primary">METTL25B</name>
    <name type="synonym">RRNAD1</name>
</gene>
<feature type="chain" id="PRO_0000289051" description="Methyltransferase-like protein 25B">
    <location>
        <begin position="1"/>
        <end position="475"/>
    </location>
</feature>
<feature type="transmembrane region" description="Helical" evidence="2">
    <location>
        <begin position="406"/>
        <end position="426"/>
    </location>
</feature>
<feature type="coiled-coil region" evidence="2">
    <location>
        <begin position="186"/>
        <end position="210"/>
    </location>
</feature>
<sequence length="475" mass="53207">MPGVSARRLSHEERRQLAVNLTRVVTLYRSILDAYIIEFFTDNLWGTLPCSWQEALDGLNPPQLATLLLGMPREGEVARYRSVWPLTLLALKSTAYALAFTRTPGFQTPSEFLENPSQSSRLTAPFRKHVRPKKQHEIRRLGELVKKLSDLTGCTQVVDVGSGQGHLSRFMSLGLGLMVKSIEGDQRLVERAQRLDQELLQTLEKEEKRNPKVVQTGPRHPPHHVVRWVDPTTLCEELLLPLETSPQSRARLLLTGLHACGDLSVALLKHFCCCPEVVALASVGCCYMKLSDPGGYPLSQWVAGLPGYELPYRLREGACHALEEYAERLQKAGPSLRTHCYRAALETVIRCAQPELRRPGVQGIPRVHELKIEEYVQRGLQRVGLDPHLPLNVAALRAHQAQENRVVAFFSLALLLAPLVETLILLDRLLYLQEQGFHAELLPIFSPELSPRNLVLVATKGPLGEAFSLLETEDN</sequence>
<comment type="subcellular location">
    <subcellularLocation>
        <location evidence="3">Membrane</location>
        <topology evidence="3">Single-pass membrane protein</topology>
    </subcellularLocation>
</comment>
<comment type="similarity">
    <text evidence="3">Belongs to the METTL25 family.</text>
</comment>
<accession>Q5E9V4</accession>
<dbReference type="EMBL" id="BT020816">
    <property type="protein sequence ID" value="AAX08833.1"/>
    <property type="molecule type" value="mRNA"/>
</dbReference>
<dbReference type="RefSeq" id="NP_001015641.1">
    <property type="nucleotide sequence ID" value="NM_001015641.1"/>
</dbReference>
<dbReference type="FunCoup" id="Q5E9V4">
    <property type="interactions" value="2198"/>
</dbReference>
<dbReference type="STRING" id="9913.ENSBTAP00000001990"/>
<dbReference type="PaxDb" id="9913-ENSBTAP00000001990"/>
<dbReference type="GeneID" id="532204"/>
<dbReference type="KEGG" id="bta:532204"/>
<dbReference type="CTD" id="51093"/>
<dbReference type="eggNOG" id="KOG2651">
    <property type="taxonomic scope" value="Eukaryota"/>
</dbReference>
<dbReference type="InParanoid" id="Q5E9V4"/>
<dbReference type="OrthoDB" id="5875367at2759"/>
<dbReference type="Proteomes" id="UP000009136">
    <property type="component" value="Unplaced"/>
</dbReference>
<dbReference type="GO" id="GO:0016020">
    <property type="term" value="C:membrane"/>
    <property type="evidence" value="ECO:0007669"/>
    <property type="project" value="UniProtKB-SubCell"/>
</dbReference>
<dbReference type="GO" id="GO:0000179">
    <property type="term" value="F:rRNA (adenine-N6,N6-)-dimethyltransferase activity"/>
    <property type="evidence" value="ECO:0007669"/>
    <property type="project" value="InterPro"/>
</dbReference>
<dbReference type="InterPro" id="IPR025714">
    <property type="entry name" value="Methyltranfer_dom"/>
</dbReference>
<dbReference type="InterPro" id="IPR052220">
    <property type="entry name" value="METTL25"/>
</dbReference>
<dbReference type="InterPro" id="IPR020596">
    <property type="entry name" value="rRNA_Ade_Mease_Trfase_CS"/>
</dbReference>
<dbReference type="InterPro" id="IPR029063">
    <property type="entry name" value="SAM-dependent_MTases_sf"/>
</dbReference>
<dbReference type="PANTHER" id="PTHR12496">
    <property type="entry name" value="CGI-41 METHYLTRANSFERASE"/>
    <property type="match status" value="1"/>
</dbReference>
<dbReference type="PANTHER" id="PTHR12496:SF2">
    <property type="entry name" value="METHYLTRANSFERASE-LIKE PROTEIN 25B"/>
    <property type="match status" value="1"/>
</dbReference>
<dbReference type="Pfam" id="PF13679">
    <property type="entry name" value="Methyltransf_32"/>
    <property type="match status" value="1"/>
</dbReference>
<dbReference type="SUPFAM" id="SSF53335">
    <property type="entry name" value="S-adenosyl-L-methionine-dependent methyltransferases"/>
    <property type="match status" value="1"/>
</dbReference>
<organism>
    <name type="scientific">Bos taurus</name>
    <name type="common">Bovine</name>
    <dbReference type="NCBI Taxonomy" id="9913"/>
    <lineage>
        <taxon>Eukaryota</taxon>
        <taxon>Metazoa</taxon>
        <taxon>Chordata</taxon>
        <taxon>Craniata</taxon>
        <taxon>Vertebrata</taxon>
        <taxon>Euteleostomi</taxon>
        <taxon>Mammalia</taxon>
        <taxon>Eutheria</taxon>
        <taxon>Laurasiatheria</taxon>
        <taxon>Artiodactyla</taxon>
        <taxon>Ruminantia</taxon>
        <taxon>Pecora</taxon>
        <taxon>Bovidae</taxon>
        <taxon>Bovinae</taxon>
        <taxon>Bos</taxon>
    </lineage>
</organism>
<protein>
    <recommendedName>
        <fullName>Methyltransferase-like protein 25B</fullName>
    </recommendedName>
    <alternativeName>
        <fullName evidence="1">Protein RRNAD1</fullName>
    </alternativeName>
</protein>
<reference key="1">
    <citation type="journal article" date="2005" name="BMC Genomics">
        <title>Characterization of 954 bovine full-CDS cDNA sequences.</title>
        <authorList>
            <person name="Harhay G.P."/>
            <person name="Sonstegard T.S."/>
            <person name="Keele J.W."/>
            <person name="Heaton M.P."/>
            <person name="Clawson M.L."/>
            <person name="Snelling W.M."/>
            <person name="Wiedmann R.T."/>
            <person name="Van Tassell C.P."/>
            <person name="Smith T.P.L."/>
        </authorList>
    </citation>
    <scope>NUCLEOTIDE SEQUENCE [LARGE SCALE MRNA]</scope>
</reference>
<evidence type="ECO:0000250" key="1">
    <source>
        <dbReference type="UniProtKB" id="Q96FB5"/>
    </source>
</evidence>
<evidence type="ECO:0000255" key="2"/>
<evidence type="ECO:0000305" key="3"/>
<proteinExistence type="evidence at transcript level"/>